<name>GP173_RAT</name>
<comment type="function">
    <text evidence="1 4">Is a receptor for the SMIM20 derived peptides Phoenixin-14 and Phoenixin-20 (PubMed:27440717). It mediates the Phoenixin-14 and Phoenixin-20 augmentation of gonadotropin-releasing hormone (GNRH) signaling in the hypothalamus and pituitary gland (PubMed:27440717). In the ovary, it mediates the effects of Phoenixin-14 and Phoenixin-20 induced granulosa cell proliferation during follicular growth (By similarity).</text>
</comment>
<comment type="subcellular location">
    <subcellularLocation>
        <location evidence="7">Cell membrane</location>
        <topology evidence="2">Multi-pass membrane protein</topology>
    </subcellularLocation>
</comment>
<comment type="tissue specificity">
    <text evidence="4 5 6">Expressed in the brain, preadipocytes and pancreatic islet cells.</text>
</comment>
<comment type="similarity">
    <text evidence="3">Belongs to the G-protein coupled receptor 1 family.</text>
</comment>
<accession>Q9JJH2</accession>
<organism>
    <name type="scientific">Rattus norvegicus</name>
    <name type="common">Rat</name>
    <dbReference type="NCBI Taxonomy" id="10116"/>
    <lineage>
        <taxon>Eukaryota</taxon>
        <taxon>Metazoa</taxon>
        <taxon>Chordata</taxon>
        <taxon>Craniata</taxon>
        <taxon>Vertebrata</taxon>
        <taxon>Euteleostomi</taxon>
        <taxon>Mammalia</taxon>
        <taxon>Eutheria</taxon>
        <taxon>Euarchontoglires</taxon>
        <taxon>Glires</taxon>
        <taxon>Rodentia</taxon>
        <taxon>Myomorpha</taxon>
        <taxon>Muroidea</taxon>
        <taxon>Muridae</taxon>
        <taxon>Murinae</taxon>
        <taxon>Rattus</taxon>
    </lineage>
</organism>
<evidence type="ECO:0000250" key="1">
    <source>
        <dbReference type="UniProtKB" id="Q9NS66"/>
    </source>
</evidence>
<evidence type="ECO:0000255" key="2"/>
<evidence type="ECO:0000255" key="3">
    <source>
        <dbReference type="PROSITE-ProRule" id="PRU00521"/>
    </source>
</evidence>
<evidence type="ECO:0000269" key="4">
    <source>
    </source>
</evidence>
<evidence type="ECO:0000269" key="5">
    <source>
    </source>
</evidence>
<evidence type="ECO:0000269" key="6">
    <source>
    </source>
</evidence>
<evidence type="ECO:0000305" key="7"/>
<feature type="chain" id="PRO_0000069652" description="Probable G-protein coupled receptor 173">
    <location>
        <begin position="1"/>
        <end position="373"/>
    </location>
</feature>
<feature type="topological domain" description="Extracellular" evidence="2">
    <location>
        <begin position="1"/>
        <end position="26"/>
    </location>
</feature>
<feature type="transmembrane region" description="Helical; Name=1" evidence="2">
    <location>
        <begin position="27"/>
        <end position="47"/>
    </location>
</feature>
<feature type="topological domain" description="Cytoplasmic" evidence="2">
    <location>
        <begin position="48"/>
        <end position="59"/>
    </location>
</feature>
<feature type="transmembrane region" description="Helical; Name=2" evidence="2">
    <location>
        <begin position="60"/>
        <end position="80"/>
    </location>
</feature>
<feature type="topological domain" description="Extracellular" evidence="2">
    <location>
        <begin position="81"/>
        <end position="97"/>
    </location>
</feature>
<feature type="transmembrane region" description="Helical; Name=3" evidence="2">
    <location>
        <begin position="98"/>
        <end position="118"/>
    </location>
</feature>
<feature type="topological domain" description="Cytoplasmic" evidence="2">
    <location>
        <begin position="119"/>
        <end position="139"/>
    </location>
</feature>
<feature type="transmembrane region" description="Helical; Name=4" evidence="2">
    <location>
        <begin position="140"/>
        <end position="160"/>
    </location>
</feature>
<feature type="topological domain" description="Extracellular" evidence="2">
    <location>
        <begin position="161"/>
        <end position="188"/>
    </location>
</feature>
<feature type="transmembrane region" description="Helical; Name=5" evidence="2">
    <location>
        <begin position="189"/>
        <end position="209"/>
    </location>
</feature>
<feature type="topological domain" description="Cytoplasmic" evidence="2">
    <location>
        <begin position="210"/>
        <end position="287"/>
    </location>
</feature>
<feature type="transmembrane region" description="Helical; Name=6" evidence="2">
    <location>
        <begin position="288"/>
        <end position="308"/>
    </location>
</feature>
<feature type="topological domain" description="Extracellular" evidence="2">
    <location>
        <begin position="309"/>
        <end position="322"/>
    </location>
</feature>
<feature type="transmembrane region" description="Helical; Name=7" evidence="2">
    <location>
        <begin position="323"/>
        <end position="343"/>
    </location>
</feature>
<feature type="topological domain" description="Cytoplasmic" evidence="2">
    <location>
        <begin position="344"/>
        <end position="373"/>
    </location>
</feature>
<feature type="glycosylation site" description="N-linked (GlcNAc...) asparagine" evidence="2">
    <location>
        <position position="3"/>
    </location>
</feature>
<feature type="glycosylation site" description="N-linked (GlcNAc...) asparagine" evidence="2">
    <location>
        <position position="184"/>
    </location>
</feature>
<feature type="disulfide bond" evidence="3">
    <location>
        <begin position="96"/>
        <end position="174"/>
    </location>
</feature>
<reference key="1">
    <citation type="journal article" date="2000" name="Biochem. Biophys. Res. Commun.">
        <title>An evolutionarily conserved G-protein coupled receptor family, SREB, expressed in the central nervous system.</title>
        <authorList>
            <person name="Matsumoto M."/>
            <person name="Saito T."/>
            <person name="Takasaki J."/>
            <person name="Kamohara M."/>
            <person name="Sugimoto T."/>
            <person name="Kobayashi M."/>
            <person name="Tadokoro M."/>
            <person name="Matsumoto S."/>
            <person name="Ohishi T."/>
            <person name="Furuichi K."/>
        </authorList>
    </citation>
    <scope>NUCLEOTIDE SEQUENCE [MRNA]</scope>
    <source>
        <tissue>Brain</tissue>
    </source>
</reference>
<reference key="2">
    <citation type="journal article" date="2016" name="Am. J. Physiol.">
        <title>Hypothalamic action of phoenixin to control reproductive hormone secretion in females: importance of the orphan G protein-coupled receptor Gpr173.</title>
        <authorList>
            <person name="Stein L.M."/>
            <person name="Tullock C.W."/>
            <person name="Mathews S.K."/>
            <person name="Garcia-Galiano D."/>
            <person name="Elias C.F."/>
            <person name="Samson W.K."/>
            <person name="Yosten G.L."/>
        </authorList>
    </citation>
    <scope>FUNCTION</scope>
    <scope>TISSUE SPECIFICITY</scope>
</reference>
<reference key="3">
    <citation type="journal article" date="2018" name="Biochim. Biophys. Acta">
        <title>Phoenixin-14 stimulates differentiation of 3T3-L1 preadipocytes via cAMP/Epac-dependent mechanism.</title>
        <authorList>
            <person name="Billert M."/>
            <person name="Wojciechowicz T."/>
            <person name="Jasaszwili M."/>
            <person name="Szczepankiewicz D."/>
            <person name="Wasko J."/>
            <person name="Kazmierczak S."/>
            <person name="Strowski M.Z."/>
            <person name="Nowak K.W."/>
            <person name="Skrzypski M."/>
        </authorList>
    </citation>
    <scope>TISSUE SPECIFICITY</scope>
</reference>
<reference key="4">
    <citation type="journal article" date="2019" name="Biochim. Biophys. Acta">
        <title>Phoenixin-14 stimulates proliferation and insulin secretion in insulin producing INS-1E cells.</title>
        <authorList>
            <person name="Billert M."/>
            <person name="Kolodziejski P.A."/>
            <person name="Strowski M.Z."/>
            <person name="Nowak K.W."/>
            <person name="Skrzypski M."/>
        </authorList>
    </citation>
    <scope>TISSUE SPECIFICITY</scope>
</reference>
<dbReference type="EMBL" id="AB040804">
    <property type="protein sequence ID" value="BAA96650.1"/>
    <property type="molecule type" value="mRNA"/>
</dbReference>
<dbReference type="RefSeq" id="NP_071591.1">
    <property type="nucleotide sequence ID" value="NM_022255.3"/>
</dbReference>
<dbReference type="SMR" id="Q9JJH2"/>
<dbReference type="FunCoup" id="Q9JJH2">
    <property type="interactions" value="531"/>
</dbReference>
<dbReference type="STRING" id="10116.ENSRNOP00000073518"/>
<dbReference type="GlyCosmos" id="Q9JJH2">
    <property type="glycosylation" value="2 sites, No reported glycans"/>
</dbReference>
<dbReference type="GlyGen" id="Q9JJH2">
    <property type="glycosylation" value="2 sites"/>
</dbReference>
<dbReference type="PhosphoSitePlus" id="Q9JJH2"/>
<dbReference type="Ensembl" id="ENSRNOT00000079982.2">
    <property type="protein sequence ID" value="ENSRNOP00000096581.1"/>
    <property type="gene ID" value="ENSRNOG00000060137.2"/>
</dbReference>
<dbReference type="GeneID" id="64021"/>
<dbReference type="KEGG" id="rno:64021"/>
<dbReference type="AGR" id="RGD:620748"/>
<dbReference type="CTD" id="54328"/>
<dbReference type="RGD" id="620748">
    <property type="gene designation" value="Gpr173"/>
</dbReference>
<dbReference type="GeneTree" id="ENSGT00890000139436"/>
<dbReference type="InParanoid" id="Q9JJH2"/>
<dbReference type="OMA" id="KCLRTHT"/>
<dbReference type="OrthoDB" id="6129346at2759"/>
<dbReference type="PhylomeDB" id="Q9JJH2"/>
<dbReference type="PRO" id="PR:Q9JJH2"/>
<dbReference type="Proteomes" id="UP000002494">
    <property type="component" value="Chromosome X"/>
</dbReference>
<dbReference type="GO" id="GO:0005886">
    <property type="term" value="C:plasma membrane"/>
    <property type="evidence" value="ECO:0000318"/>
    <property type="project" value="GO_Central"/>
</dbReference>
<dbReference type="GO" id="GO:0004968">
    <property type="term" value="F:gonadotropin-releasing hormone receptor activity"/>
    <property type="evidence" value="ECO:0000266"/>
    <property type="project" value="RGD"/>
</dbReference>
<dbReference type="GO" id="GO:2001223">
    <property type="term" value="P:negative regulation of neuron migration"/>
    <property type="evidence" value="ECO:0000266"/>
    <property type="project" value="RGD"/>
</dbReference>
<dbReference type="FunFam" id="1.20.1070.10:FF:000074">
    <property type="entry name" value="probable G-protein coupled receptor 173"/>
    <property type="match status" value="1"/>
</dbReference>
<dbReference type="Gene3D" id="1.20.1070.10">
    <property type="entry name" value="Rhodopsin 7-helix transmembrane proteins"/>
    <property type="match status" value="1"/>
</dbReference>
<dbReference type="InterPro" id="IPR051509">
    <property type="entry name" value="GPCR_Orphan/Phoenixin"/>
</dbReference>
<dbReference type="InterPro" id="IPR000276">
    <property type="entry name" value="GPCR_Rhodpsn"/>
</dbReference>
<dbReference type="InterPro" id="IPR017452">
    <property type="entry name" value="GPCR_Rhodpsn_7TM"/>
</dbReference>
<dbReference type="PANTHER" id="PTHR19268">
    <property type="entry name" value="G PROTEIN-COUPLED RECEPTOR"/>
    <property type="match status" value="1"/>
</dbReference>
<dbReference type="PANTHER" id="PTHR19268:SF4">
    <property type="entry name" value="G-PROTEIN COUPLED RECEPTOR 173-RELATED"/>
    <property type="match status" value="1"/>
</dbReference>
<dbReference type="Pfam" id="PF00001">
    <property type="entry name" value="7tm_1"/>
    <property type="match status" value="1"/>
</dbReference>
<dbReference type="PRINTS" id="PR00237">
    <property type="entry name" value="GPCRRHODOPSN"/>
</dbReference>
<dbReference type="SUPFAM" id="SSF81321">
    <property type="entry name" value="Family A G protein-coupled receptor-like"/>
    <property type="match status" value="1"/>
</dbReference>
<dbReference type="PROSITE" id="PS50262">
    <property type="entry name" value="G_PROTEIN_RECEP_F1_2"/>
    <property type="match status" value="1"/>
</dbReference>
<sequence length="373" mass="41511">MANTTGEPEEVSGALSLPSASAYVKLVLLGLIMCVSLAGNAILSLLVLKERALHKAPYYFLLDLCLADGIRSAICFPFVLASVRHGSSWTFSALSCKIVAFMAVLFCFHAAFMLFCISVTRYMAIAHHRFYAKRMTLWTCAAVICMAWTLSVAMAFPPVFDVGTYKFIREEDQCIFEHRYFKANDTLGFMLMLAVLMAATHAVYGKLLLFEYRHRKMKPVQMVPAISQNWTFHGPGATGQAAANWIAGFGRGPMPPTLLGIRQNGHAASRRLLGMDEVKGEKQLGRMFYAITLLFLLLWSPYIVACYWRVFVKACAVPHRYLATAVWMSFAQAAVNPIVCFLLNKDLKKCLRTHAPCWGTGGAPAPREPYCVM</sequence>
<keyword id="KW-1003">Cell membrane</keyword>
<keyword id="KW-1015">Disulfide bond</keyword>
<keyword id="KW-0297">G-protein coupled receptor</keyword>
<keyword id="KW-0325">Glycoprotein</keyword>
<keyword id="KW-0472">Membrane</keyword>
<keyword id="KW-0675">Receptor</keyword>
<keyword id="KW-1185">Reference proteome</keyword>
<keyword id="KW-0807">Transducer</keyword>
<keyword id="KW-0812">Transmembrane</keyword>
<keyword id="KW-1133">Transmembrane helix</keyword>
<gene>
    <name type="primary">Gpr173</name>
    <name type="synonym">Sreb3</name>
</gene>
<protein>
    <recommendedName>
        <fullName>Probable G-protein coupled receptor 173</fullName>
    </recommendedName>
    <alternativeName>
        <fullName>Super conserved receptor expressed in brain 3</fullName>
    </alternativeName>
</protein>
<proteinExistence type="evidence at transcript level"/>